<keyword id="KW-0963">Cytoplasm</keyword>
<keyword id="KW-0342">GTP-binding</keyword>
<keyword id="KW-0396">Initiation factor</keyword>
<keyword id="KW-0547">Nucleotide-binding</keyword>
<keyword id="KW-0648">Protein biosynthesis</keyword>
<sequence length="956" mass="104573">MSEERVIRINKVLRELNISLERAVDYLKDKGIAIDANPNAKISDSEFNILQSQFAGDKGNKEASKEVGEEKRKEKEALRVEREKEIEDKRRQEEERQKQQEIIKARAVVSGPVQVGKIDLNPKKPAAVSPEEPVKAEEPKTVTPTQTEKPVQKETVQSEPVAPVVSEEKKVEKPIITEKKEVKAESSKTAQEPIISTDPTTAEETITTQYQKLSGTTLTGQTIDLSQFNKPKKKKEDPKITPNKPGTPGVGNNNNANKNKRKRIAPKPGTPGAPKPATGNAPGTPNPNKITPNSGGGFNANRNARPGFVKGNRPAIVAKVEPTEEEVKNQIRETLEKLQGKGGKSKAAKYRRDKRETHRQKSDDEQRALDEGSKTIKVTEFVTVGEIAIMMDVPITKVIGTCMSLGIMVTMNQRLDAETLTIVADEFGYDVEFITVDIEEAIEVVEDREEDLVTRAPIVTVMGHVDHGKTSLLDYIRKENVIAGESGGITQHIGAYGVTLDNGQKIAFLDTPGHEAFTAMRARGAQVTDIAIIVIAADDDIMPQTKEAISHAQAAGVPIIFAINKVDKPNANPDKIKERLAGMNLLVEDWGGKIQSHDISAKTGLGVKELLEKVLLEAEILDLKSNPNKAAQGTVVEAYLDKGKGYVSTILVQHGTLKIGDYMLAGKHHGKVKAMHDERGHTVLTAGPSTPVSVLGLDGAATAGDKFNVFEDEKEAKQIASKRSQLMREQSVRTQRHITLDEIGRRIALGQFKELNVILKGDVDGSVEALSDSFSKLSTEEVQINIIHKGVGAITETDVNLASASDAIIIGFNVRPAGNARQLADKEEIDIRYYSIIYAAIDDLKDAMEGMLAPEMKEEVLGTAEIREIFKISKVGSIAGCMVTDGKILRTSKIRVIRDGVVVHTGELVALKRFKDDVKEVTKGYDCGIQIKGFNDIEISDVIEAYHEVAIKKKLK</sequence>
<accession>A5FJF9</accession>
<name>IF2_FLAJ1</name>
<comment type="function">
    <text evidence="2">One of the essential components for the initiation of protein synthesis. Protects formylmethionyl-tRNA from spontaneous hydrolysis and promotes its binding to the 30S ribosomal subunits. Also involved in the hydrolysis of GTP during the formation of the 70S ribosomal complex.</text>
</comment>
<comment type="subcellular location">
    <subcellularLocation>
        <location evidence="2">Cytoplasm</location>
    </subcellularLocation>
</comment>
<comment type="similarity">
    <text evidence="2">Belongs to the TRAFAC class translation factor GTPase superfamily. Classic translation factor GTPase family. IF-2 subfamily.</text>
</comment>
<reference key="1">
    <citation type="journal article" date="2009" name="Appl. Environ. Microbiol.">
        <title>Novel features of the polysaccharide-digesting gliding bacterium Flavobacterium johnsoniae as revealed by genome sequence analysis.</title>
        <authorList>
            <person name="McBride M.J."/>
            <person name="Xie G."/>
            <person name="Martens E.C."/>
            <person name="Lapidus A."/>
            <person name="Henrissat B."/>
            <person name="Rhodes R.G."/>
            <person name="Goltsman E."/>
            <person name="Wang W."/>
            <person name="Xu J."/>
            <person name="Hunnicutt D.W."/>
            <person name="Staroscik A.M."/>
            <person name="Hoover T.R."/>
            <person name="Cheng Y.Q."/>
            <person name="Stein J.L."/>
        </authorList>
    </citation>
    <scope>NUCLEOTIDE SEQUENCE [LARGE SCALE GENOMIC DNA]</scope>
    <source>
        <strain>ATCC 17061 / DSM 2064 / JCM 8514 / BCRC 14874 / CCUG 350202 / NBRC 14942 / NCIMB 11054 / UW101</strain>
    </source>
</reference>
<evidence type="ECO:0000250" key="1"/>
<evidence type="ECO:0000255" key="2">
    <source>
        <dbReference type="HAMAP-Rule" id="MF_00100"/>
    </source>
</evidence>
<evidence type="ECO:0000256" key="3">
    <source>
        <dbReference type="SAM" id="MobiDB-lite"/>
    </source>
</evidence>
<protein>
    <recommendedName>
        <fullName evidence="2">Translation initiation factor IF-2</fullName>
    </recommendedName>
</protein>
<gene>
    <name evidence="2" type="primary">infB</name>
    <name type="ordered locus">Fjoh_1630</name>
</gene>
<organism>
    <name type="scientific">Flavobacterium johnsoniae (strain ATCC 17061 / DSM 2064 / JCM 8514 / BCRC 14874 / CCUG 350202 / NBRC 14942 / NCIMB 11054 / UW101)</name>
    <name type="common">Cytophaga johnsonae</name>
    <dbReference type="NCBI Taxonomy" id="376686"/>
    <lineage>
        <taxon>Bacteria</taxon>
        <taxon>Pseudomonadati</taxon>
        <taxon>Bacteroidota</taxon>
        <taxon>Flavobacteriia</taxon>
        <taxon>Flavobacteriales</taxon>
        <taxon>Flavobacteriaceae</taxon>
        <taxon>Flavobacterium</taxon>
    </lineage>
</organism>
<dbReference type="EMBL" id="CP000685">
    <property type="protein sequence ID" value="ABQ04662.1"/>
    <property type="molecule type" value="Genomic_DNA"/>
</dbReference>
<dbReference type="RefSeq" id="WP_012023706.1">
    <property type="nucleotide sequence ID" value="NZ_MUGZ01000017.1"/>
</dbReference>
<dbReference type="SMR" id="A5FJF9"/>
<dbReference type="STRING" id="376686.Fjoh_1630"/>
<dbReference type="KEGG" id="fjo:Fjoh_1630"/>
<dbReference type="eggNOG" id="COG0532">
    <property type="taxonomic scope" value="Bacteria"/>
</dbReference>
<dbReference type="HOGENOM" id="CLU_006301_0_2_10"/>
<dbReference type="OrthoDB" id="9811804at2"/>
<dbReference type="Proteomes" id="UP000006694">
    <property type="component" value="Chromosome"/>
</dbReference>
<dbReference type="GO" id="GO:0005737">
    <property type="term" value="C:cytoplasm"/>
    <property type="evidence" value="ECO:0007669"/>
    <property type="project" value="UniProtKB-SubCell"/>
</dbReference>
<dbReference type="GO" id="GO:0005525">
    <property type="term" value="F:GTP binding"/>
    <property type="evidence" value="ECO:0007669"/>
    <property type="project" value="UniProtKB-KW"/>
</dbReference>
<dbReference type="GO" id="GO:0003924">
    <property type="term" value="F:GTPase activity"/>
    <property type="evidence" value="ECO:0007669"/>
    <property type="project" value="UniProtKB-UniRule"/>
</dbReference>
<dbReference type="GO" id="GO:0003743">
    <property type="term" value="F:translation initiation factor activity"/>
    <property type="evidence" value="ECO:0007669"/>
    <property type="project" value="UniProtKB-UniRule"/>
</dbReference>
<dbReference type="CDD" id="cd01887">
    <property type="entry name" value="IF2_eIF5B"/>
    <property type="match status" value="1"/>
</dbReference>
<dbReference type="CDD" id="cd03702">
    <property type="entry name" value="IF2_mtIF2_II"/>
    <property type="match status" value="1"/>
</dbReference>
<dbReference type="CDD" id="cd03692">
    <property type="entry name" value="mtIF2_IVc"/>
    <property type="match status" value="1"/>
</dbReference>
<dbReference type="FunFam" id="2.40.30.10:FF:000007">
    <property type="entry name" value="Translation initiation factor IF-2"/>
    <property type="match status" value="1"/>
</dbReference>
<dbReference type="FunFam" id="2.40.30.10:FF:000008">
    <property type="entry name" value="Translation initiation factor IF-2"/>
    <property type="match status" value="1"/>
</dbReference>
<dbReference type="FunFam" id="3.40.50.10050:FF:000001">
    <property type="entry name" value="Translation initiation factor IF-2"/>
    <property type="match status" value="1"/>
</dbReference>
<dbReference type="FunFam" id="3.40.50.300:FF:000019">
    <property type="entry name" value="Translation initiation factor IF-2"/>
    <property type="match status" value="1"/>
</dbReference>
<dbReference type="Gene3D" id="3.40.50.300">
    <property type="entry name" value="P-loop containing nucleotide triphosphate hydrolases"/>
    <property type="match status" value="1"/>
</dbReference>
<dbReference type="Gene3D" id="2.40.30.10">
    <property type="entry name" value="Translation factors"/>
    <property type="match status" value="2"/>
</dbReference>
<dbReference type="Gene3D" id="3.40.50.10050">
    <property type="entry name" value="Translation initiation factor IF- 2, domain 3"/>
    <property type="match status" value="1"/>
</dbReference>
<dbReference type="HAMAP" id="MF_00100_B">
    <property type="entry name" value="IF_2_B"/>
    <property type="match status" value="1"/>
</dbReference>
<dbReference type="InterPro" id="IPR053905">
    <property type="entry name" value="EF-G-like_DII"/>
</dbReference>
<dbReference type="InterPro" id="IPR044145">
    <property type="entry name" value="IF2_II"/>
</dbReference>
<dbReference type="InterPro" id="IPR006847">
    <property type="entry name" value="IF2_N"/>
</dbReference>
<dbReference type="InterPro" id="IPR027417">
    <property type="entry name" value="P-loop_NTPase"/>
</dbReference>
<dbReference type="InterPro" id="IPR005225">
    <property type="entry name" value="Small_GTP-bd"/>
</dbReference>
<dbReference type="InterPro" id="IPR000795">
    <property type="entry name" value="T_Tr_GTP-bd_dom"/>
</dbReference>
<dbReference type="InterPro" id="IPR000178">
    <property type="entry name" value="TF_IF2_bacterial-like"/>
</dbReference>
<dbReference type="InterPro" id="IPR015760">
    <property type="entry name" value="TIF_IF2"/>
</dbReference>
<dbReference type="InterPro" id="IPR023115">
    <property type="entry name" value="TIF_IF2_dom3"/>
</dbReference>
<dbReference type="InterPro" id="IPR036925">
    <property type="entry name" value="TIF_IF2_dom3_sf"/>
</dbReference>
<dbReference type="InterPro" id="IPR009000">
    <property type="entry name" value="Transl_B-barrel_sf"/>
</dbReference>
<dbReference type="NCBIfam" id="TIGR00487">
    <property type="entry name" value="IF-2"/>
    <property type="match status" value="1"/>
</dbReference>
<dbReference type="NCBIfam" id="TIGR00231">
    <property type="entry name" value="small_GTP"/>
    <property type="match status" value="1"/>
</dbReference>
<dbReference type="PANTHER" id="PTHR43381:SF5">
    <property type="entry name" value="TR-TYPE G DOMAIN-CONTAINING PROTEIN"/>
    <property type="match status" value="1"/>
</dbReference>
<dbReference type="PANTHER" id="PTHR43381">
    <property type="entry name" value="TRANSLATION INITIATION FACTOR IF-2-RELATED"/>
    <property type="match status" value="1"/>
</dbReference>
<dbReference type="Pfam" id="PF22042">
    <property type="entry name" value="EF-G_D2"/>
    <property type="match status" value="1"/>
</dbReference>
<dbReference type="Pfam" id="PF00009">
    <property type="entry name" value="GTP_EFTU"/>
    <property type="match status" value="1"/>
</dbReference>
<dbReference type="Pfam" id="PF11987">
    <property type="entry name" value="IF-2"/>
    <property type="match status" value="1"/>
</dbReference>
<dbReference type="Pfam" id="PF04760">
    <property type="entry name" value="IF2_N"/>
    <property type="match status" value="1"/>
</dbReference>
<dbReference type="SUPFAM" id="SSF52156">
    <property type="entry name" value="Initiation factor IF2/eIF5b, domain 3"/>
    <property type="match status" value="1"/>
</dbReference>
<dbReference type="SUPFAM" id="SSF52540">
    <property type="entry name" value="P-loop containing nucleoside triphosphate hydrolases"/>
    <property type="match status" value="1"/>
</dbReference>
<dbReference type="SUPFAM" id="SSF50447">
    <property type="entry name" value="Translation proteins"/>
    <property type="match status" value="2"/>
</dbReference>
<dbReference type="PROSITE" id="PS51722">
    <property type="entry name" value="G_TR_2"/>
    <property type="match status" value="1"/>
</dbReference>
<dbReference type="PROSITE" id="PS01176">
    <property type="entry name" value="IF2"/>
    <property type="match status" value="1"/>
</dbReference>
<feature type="chain" id="PRO_0000335468" description="Translation initiation factor IF-2">
    <location>
        <begin position="1"/>
        <end position="956"/>
    </location>
</feature>
<feature type="domain" description="tr-type G">
    <location>
        <begin position="454"/>
        <end position="622"/>
    </location>
</feature>
<feature type="region of interest" description="Disordered" evidence="3">
    <location>
        <begin position="53"/>
        <end position="102"/>
    </location>
</feature>
<feature type="region of interest" description="Disordered" evidence="3">
    <location>
        <begin position="116"/>
        <end position="315"/>
    </location>
</feature>
<feature type="region of interest" description="Disordered" evidence="3">
    <location>
        <begin position="334"/>
        <end position="371"/>
    </location>
</feature>
<feature type="region of interest" description="G1" evidence="1">
    <location>
        <begin position="463"/>
        <end position="470"/>
    </location>
</feature>
<feature type="region of interest" description="G2" evidence="1">
    <location>
        <begin position="488"/>
        <end position="492"/>
    </location>
</feature>
<feature type="region of interest" description="G3" evidence="1">
    <location>
        <begin position="510"/>
        <end position="513"/>
    </location>
</feature>
<feature type="region of interest" description="G4" evidence="1">
    <location>
        <begin position="564"/>
        <end position="567"/>
    </location>
</feature>
<feature type="region of interest" description="G5" evidence="1">
    <location>
        <begin position="600"/>
        <end position="602"/>
    </location>
</feature>
<feature type="compositionally biased region" description="Basic and acidic residues" evidence="3">
    <location>
        <begin position="58"/>
        <end position="102"/>
    </location>
</feature>
<feature type="compositionally biased region" description="Polar residues" evidence="3">
    <location>
        <begin position="142"/>
        <end position="158"/>
    </location>
</feature>
<feature type="compositionally biased region" description="Basic and acidic residues" evidence="3">
    <location>
        <begin position="166"/>
        <end position="186"/>
    </location>
</feature>
<feature type="compositionally biased region" description="Low complexity" evidence="3">
    <location>
        <begin position="197"/>
        <end position="208"/>
    </location>
</feature>
<feature type="compositionally biased region" description="Polar residues" evidence="3">
    <location>
        <begin position="209"/>
        <end position="229"/>
    </location>
</feature>
<feature type="compositionally biased region" description="Low complexity" evidence="3">
    <location>
        <begin position="240"/>
        <end position="257"/>
    </location>
</feature>
<feature type="compositionally biased region" description="Basic residues" evidence="3">
    <location>
        <begin position="343"/>
        <end position="352"/>
    </location>
</feature>
<feature type="compositionally biased region" description="Basic and acidic residues" evidence="3">
    <location>
        <begin position="353"/>
        <end position="371"/>
    </location>
</feature>
<feature type="binding site" evidence="2">
    <location>
        <begin position="463"/>
        <end position="470"/>
    </location>
    <ligand>
        <name>GTP</name>
        <dbReference type="ChEBI" id="CHEBI:37565"/>
    </ligand>
</feature>
<feature type="binding site" evidence="2">
    <location>
        <begin position="510"/>
        <end position="514"/>
    </location>
    <ligand>
        <name>GTP</name>
        <dbReference type="ChEBI" id="CHEBI:37565"/>
    </ligand>
</feature>
<feature type="binding site" evidence="2">
    <location>
        <begin position="564"/>
        <end position="567"/>
    </location>
    <ligand>
        <name>GTP</name>
        <dbReference type="ChEBI" id="CHEBI:37565"/>
    </ligand>
</feature>
<proteinExistence type="inferred from homology"/>